<accession>Q2G8W1</accession>
<feature type="chain" id="PRO_0000251535" description="Large ribosomal subunit protein uL15">
    <location>
        <begin position="1"/>
        <end position="171"/>
    </location>
</feature>
<feature type="region of interest" description="Disordered" evidence="2">
    <location>
        <begin position="1"/>
        <end position="44"/>
    </location>
</feature>
<feature type="region of interest" description="Disordered" evidence="2">
    <location>
        <begin position="150"/>
        <end position="171"/>
    </location>
</feature>
<feature type="compositionally biased region" description="Polar residues" evidence="2">
    <location>
        <begin position="1"/>
        <end position="10"/>
    </location>
</feature>
<feature type="compositionally biased region" description="Gly residues" evidence="2">
    <location>
        <begin position="21"/>
        <end position="35"/>
    </location>
</feature>
<feature type="compositionally biased region" description="Basic and acidic residues" evidence="2">
    <location>
        <begin position="157"/>
        <end position="171"/>
    </location>
</feature>
<sequence>MKLNEISDNNGARKGRMRVGRGIGSGKGKTAGRGQKGAKARSGVSINGFEGGQMPLHMRLPKRGFNNIFAKDYAEVNLGMVQRVIDAGKLDISGTVDHAALKAAGLARGGKDGVRLLAKGELTSKVAFKVAGASKGAFAAVEKAGGSIALPEAQPSEQEKKAARREANKAK</sequence>
<organism>
    <name type="scientific">Novosphingobium aromaticivorans (strain ATCC 700278 / DSM 12444 / CCUG 56034 / CIP 105152 / NBRC 16084 / F199)</name>
    <dbReference type="NCBI Taxonomy" id="279238"/>
    <lineage>
        <taxon>Bacteria</taxon>
        <taxon>Pseudomonadati</taxon>
        <taxon>Pseudomonadota</taxon>
        <taxon>Alphaproteobacteria</taxon>
        <taxon>Sphingomonadales</taxon>
        <taxon>Sphingomonadaceae</taxon>
        <taxon>Novosphingobium</taxon>
    </lineage>
</organism>
<keyword id="KW-1185">Reference proteome</keyword>
<keyword id="KW-0687">Ribonucleoprotein</keyword>
<keyword id="KW-0689">Ribosomal protein</keyword>
<keyword id="KW-0694">RNA-binding</keyword>
<keyword id="KW-0699">rRNA-binding</keyword>
<reference key="1">
    <citation type="submission" date="2006-01" db="EMBL/GenBank/DDBJ databases">
        <title>Complete sequence of Novosphingobium aromaticivorans DSM 12444.</title>
        <authorList>
            <consortium name="US DOE Joint Genome Institute"/>
            <person name="Copeland A."/>
            <person name="Lucas S."/>
            <person name="Lapidus A."/>
            <person name="Barry K."/>
            <person name="Detter J.C."/>
            <person name="Glavina T."/>
            <person name="Hammon N."/>
            <person name="Israni S."/>
            <person name="Pitluck S."/>
            <person name="Chain P."/>
            <person name="Malfatti S."/>
            <person name="Shin M."/>
            <person name="Vergez L."/>
            <person name="Schmutz J."/>
            <person name="Larimer F."/>
            <person name="Land M."/>
            <person name="Kyrpides N."/>
            <person name="Ivanova N."/>
            <person name="Fredrickson J."/>
            <person name="Balkwill D."/>
            <person name="Romine M.F."/>
            <person name="Richardson P."/>
        </authorList>
    </citation>
    <scope>NUCLEOTIDE SEQUENCE [LARGE SCALE GENOMIC DNA]</scope>
    <source>
        <strain>ATCC 700278 / DSM 12444 / CCUG 56034 / CIP 105152 / NBRC 16084 / F199</strain>
    </source>
</reference>
<dbReference type="EMBL" id="CP000248">
    <property type="protein sequence ID" value="ABD25712.1"/>
    <property type="status" value="ALT_INIT"/>
    <property type="molecule type" value="Genomic_DNA"/>
</dbReference>
<dbReference type="RefSeq" id="WP_011444926.1">
    <property type="nucleotide sequence ID" value="NC_007794.1"/>
</dbReference>
<dbReference type="SMR" id="Q2G8W1"/>
<dbReference type="STRING" id="279238.Saro_1268"/>
<dbReference type="KEGG" id="nar:Saro_1268"/>
<dbReference type="eggNOG" id="COG0200">
    <property type="taxonomic scope" value="Bacteria"/>
</dbReference>
<dbReference type="HOGENOM" id="CLU_055188_4_0_5"/>
<dbReference type="Proteomes" id="UP000009134">
    <property type="component" value="Chromosome"/>
</dbReference>
<dbReference type="GO" id="GO:0022625">
    <property type="term" value="C:cytosolic large ribosomal subunit"/>
    <property type="evidence" value="ECO:0007669"/>
    <property type="project" value="TreeGrafter"/>
</dbReference>
<dbReference type="GO" id="GO:0019843">
    <property type="term" value="F:rRNA binding"/>
    <property type="evidence" value="ECO:0007669"/>
    <property type="project" value="UniProtKB-UniRule"/>
</dbReference>
<dbReference type="GO" id="GO:0003735">
    <property type="term" value="F:structural constituent of ribosome"/>
    <property type="evidence" value="ECO:0007669"/>
    <property type="project" value="InterPro"/>
</dbReference>
<dbReference type="GO" id="GO:0006412">
    <property type="term" value="P:translation"/>
    <property type="evidence" value="ECO:0007669"/>
    <property type="project" value="UniProtKB-UniRule"/>
</dbReference>
<dbReference type="Gene3D" id="3.100.10.10">
    <property type="match status" value="1"/>
</dbReference>
<dbReference type="HAMAP" id="MF_01341">
    <property type="entry name" value="Ribosomal_uL15"/>
    <property type="match status" value="1"/>
</dbReference>
<dbReference type="InterPro" id="IPR030878">
    <property type="entry name" value="Ribosomal_uL15"/>
</dbReference>
<dbReference type="InterPro" id="IPR021131">
    <property type="entry name" value="Ribosomal_uL15/eL18"/>
</dbReference>
<dbReference type="InterPro" id="IPR036227">
    <property type="entry name" value="Ribosomal_uL15/eL18_sf"/>
</dbReference>
<dbReference type="InterPro" id="IPR005749">
    <property type="entry name" value="Ribosomal_uL15_bac-type"/>
</dbReference>
<dbReference type="InterPro" id="IPR001196">
    <property type="entry name" value="Ribosomal_uL15_CS"/>
</dbReference>
<dbReference type="NCBIfam" id="TIGR01071">
    <property type="entry name" value="rplO_bact"/>
    <property type="match status" value="1"/>
</dbReference>
<dbReference type="PANTHER" id="PTHR12934">
    <property type="entry name" value="50S RIBOSOMAL PROTEIN L15"/>
    <property type="match status" value="1"/>
</dbReference>
<dbReference type="PANTHER" id="PTHR12934:SF11">
    <property type="entry name" value="LARGE RIBOSOMAL SUBUNIT PROTEIN UL15M"/>
    <property type="match status" value="1"/>
</dbReference>
<dbReference type="Pfam" id="PF00828">
    <property type="entry name" value="Ribosomal_L27A"/>
    <property type="match status" value="1"/>
</dbReference>
<dbReference type="SUPFAM" id="SSF52080">
    <property type="entry name" value="Ribosomal proteins L15p and L18e"/>
    <property type="match status" value="1"/>
</dbReference>
<dbReference type="PROSITE" id="PS00475">
    <property type="entry name" value="RIBOSOMAL_L15"/>
    <property type="match status" value="1"/>
</dbReference>
<comment type="function">
    <text evidence="1">Binds to the 23S rRNA.</text>
</comment>
<comment type="subunit">
    <text evidence="1">Part of the 50S ribosomal subunit.</text>
</comment>
<comment type="similarity">
    <text evidence="1">Belongs to the universal ribosomal protein uL15 family.</text>
</comment>
<comment type="sequence caution" evidence="3">
    <conflict type="erroneous initiation">
        <sequence resource="EMBL-CDS" id="ABD25712"/>
    </conflict>
</comment>
<gene>
    <name evidence="1" type="primary">rplO</name>
    <name type="ordered locus">Saro_1268</name>
</gene>
<protein>
    <recommendedName>
        <fullName evidence="1">Large ribosomal subunit protein uL15</fullName>
    </recommendedName>
    <alternativeName>
        <fullName evidence="3">50S ribosomal protein L15</fullName>
    </alternativeName>
</protein>
<evidence type="ECO:0000255" key="1">
    <source>
        <dbReference type="HAMAP-Rule" id="MF_01341"/>
    </source>
</evidence>
<evidence type="ECO:0000256" key="2">
    <source>
        <dbReference type="SAM" id="MobiDB-lite"/>
    </source>
</evidence>
<evidence type="ECO:0000305" key="3"/>
<proteinExistence type="inferred from homology"/>
<name>RL15_NOVAD</name>